<evidence type="ECO:0000250" key="1"/>
<evidence type="ECO:0000256" key="2">
    <source>
        <dbReference type="SAM" id="MobiDB-lite"/>
    </source>
</evidence>
<evidence type="ECO:0000305" key="3"/>
<feature type="initiator methionine" description="Removed" evidence="1">
    <location>
        <position position="1"/>
    </location>
</feature>
<feature type="chain" id="PRO_0000427984" description="3-methyl-2-oxobutanoate hydroxymethyltransferase">
    <location>
        <begin position="2"/>
        <end position="281"/>
    </location>
</feature>
<feature type="region of interest" description="Disordered" evidence="2">
    <location>
        <begin position="1"/>
        <end position="20"/>
    </location>
</feature>
<feature type="active site" description="Proton acceptor" evidence="1">
    <location>
        <position position="199"/>
    </location>
</feature>
<feature type="binding site" evidence="1">
    <location>
        <begin position="62"/>
        <end position="63"/>
    </location>
    <ligand>
        <name>3-methyl-2-oxobutanoate</name>
        <dbReference type="ChEBI" id="CHEBI:11851"/>
    </ligand>
</feature>
<feature type="binding site" evidence="1">
    <location>
        <position position="62"/>
    </location>
    <ligand>
        <name>Mg(2+)</name>
        <dbReference type="ChEBI" id="CHEBI:18420"/>
    </ligand>
</feature>
<feature type="binding site" evidence="1">
    <location>
        <position position="101"/>
    </location>
    <ligand>
        <name>3-methyl-2-oxobutanoate</name>
        <dbReference type="ChEBI" id="CHEBI:11851"/>
    </ligand>
</feature>
<feature type="binding site" evidence="1">
    <location>
        <position position="101"/>
    </location>
    <ligand>
        <name>Mg(2+)</name>
        <dbReference type="ChEBI" id="CHEBI:18420"/>
    </ligand>
</feature>
<feature type="binding site" evidence="1">
    <location>
        <position position="131"/>
    </location>
    <ligand>
        <name>3-methyl-2-oxobutanoate</name>
        <dbReference type="ChEBI" id="CHEBI:11851"/>
    </ligand>
</feature>
<feature type="binding site" evidence="1">
    <location>
        <position position="133"/>
    </location>
    <ligand>
        <name>Mg(2+)</name>
        <dbReference type="ChEBI" id="CHEBI:18420"/>
    </ligand>
</feature>
<sequence length="281" mass="29336">MSEQTIYGANTPGGSGPRTKIRTHHLQRWKADGHKWAMLTAYDYSTARIFDEAGIPVLLVGDSAANVVYGYDTTVPISIDELIPLVRGVVRGAPHALVVADLPFGSYEAGPTAALAAATRFLKDGGAHAVKLEGGERVAEQIACLTAAGIPVMAHIGFTPQSVNTLGGFRVQGRGDAAEQTIADAIAVAEAGAFAVVMEMVPAELATQITGKLTIPTVGIGAGPNCDGQVLVWQDMAGFSGAKTARFVKRYADVGGELRRAAMQYAQEVAGGVFPADEHSF</sequence>
<accession>P9WIL6</accession>
<accession>L0TAJ8</accession>
<accession>P0A5Q8</accession>
<accession>Q10505</accession>
<reference key="1">
    <citation type="journal article" date="2002" name="J. Bacteriol.">
        <title>Whole-genome comparison of Mycobacterium tuberculosis clinical and laboratory strains.</title>
        <authorList>
            <person name="Fleischmann R.D."/>
            <person name="Alland D."/>
            <person name="Eisen J.A."/>
            <person name="Carpenter L."/>
            <person name="White O."/>
            <person name="Peterson J.D."/>
            <person name="DeBoy R.T."/>
            <person name="Dodson R.J."/>
            <person name="Gwinn M.L."/>
            <person name="Haft D.H."/>
            <person name="Hickey E.K."/>
            <person name="Kolonay J.F."/>
            <person name="Nelson W.C."/>
            <person name="Umayam L.A."/>
            <person name="Ermolaeva M.D."/>
            <person name="Salzberg S.L."/>
            <person name="Delcher A."/>
            <person name="Utterback T.R."/>
            <person name="Weidman J.F."/>
            <person name="Khouri H.M."/>
            <person name="Gill J."/>
            <person name="Mikula A."/>
            <person name="Bishai W."/>
            <person name="Jacobs W.R. Jr."/>
            <person name="Venter J.C."/>
            <person name="Fraser C.M."/>
        </authorList>
    </citation>
    <scope>NUCLEOTIDE SEQUENCE [LARGE SCALE GENOMIC DNA]</scope>
    <source>
        <strain>CDC 1551 / Oshkosh</strain>
    </source>
</reference>
<name>PANB_MYCTO</name>
<proteinExistence type="inferred from homology"/>
<keyword id="KW-0963">Cytoplasm</keyword>
<keyword id="KW-0460">Magnesium</keyword>
<keyword id="KW-0479">Metal-binding</keyword>
<keyword id="KW-0566">Pantothenate biosynthesis</keyword>
<keyword id="KW-1185">Reference proteome</keyword>
<keyword id="KW-0808">Transferase</keyword>
<gene>
    <name type="primary">panB</name>
    <name type="ordered locus">MT2284</name>
</gene>
<dbReference type="EC" id="2.1.2.11"/>
<dbReference type="EMBL" id="AE000516">
    <property type="protein sequence ID" value="AAK46569.1"/>
    <property type="molecule type" value="Genomic_DNA"/>
</dbReference>
<dbReference type="PIR" id="E70776">
    <property type="entry name" value="E70776"/>
</dbReference>
<dbReference type="RefSeq" id="WP_003411489.1">
    <property type="nucleotide sequence ID" value="NZ_KK341227.1"/>
</dbReference>
<dbReference type="SMR" id="P9WIL6"/>
<dbReference type="KEGG" id="mtc:MT2284"/>
<dbReference type="PATRIC" id="fig|83331.31.peg.2458"/>
<dbReference type="HOGENOM" id="CLU_036645_1_0_11"/>
<dbReference type="UniPathway" id="UPA00028">
    <property type="reaction ID" value="UER00003"/>
</dbReference>
<dbReference type="Proteomes" id="UP000001020">
    <property type="component" value="Chromosome"/>
</dbReference>
<dbReference type="GO" id="GO:0005737">
    <property type="term" value="C:cytoplasm"/>
    <property type="evidence" value="ECO:0007669"/>
    <property type="project" value="UniProtKB-SubCell"/>
</dbReference>
<dbReference type="GO" id="GO:0003864">
    <property type="term" value="F:3-methyl-2-oxobutanoate hydroxymethyltransferase activity"/>
    <property type="evidence" value="ECO:0007669"/>
    <property type="project" value="UniProtKB-UniRule"/>
</dbReference>
<dbReference type="GO" id="GO:0000287">
    <property type="term" value="F:magnesium ion binding"/>
    <property type="evidence" value="ECO:0007669"/>
    <property type="project" value="TreeGrafter"/>
</dbReference>
<dbReference type="GO" id="GO:0015940">
    <property type="term" value="P:pantothenate biosynthetic process"/>
    <property type="evidence" value="ECO:0007669"/>
    <property type="project" value="UniProtKB-UniRule"/>
</dbReference>
<dbReference type="CDD" id="cd06557">
    <property type="entry name" value="KPHMT-like"/>
    <property type="match status" value="1"/>
</dbReference>
<dbReference type="FunFam" id="3.20.20.60:FF:000003">
    <property type="entry name" value="3-methyl-2-oxobutanoate hydroxymethyltransferase"/>
    <property type="match status" value="1"/>
</dbReference>
<dbReference type="Gene3D" id="3.20.20.60">
    <property type="entry name" value="Phosphoenolpyruvate-binding domains"/>
    <property type="match status" value="1"/>
</dbReference>
<dbReference type="HAMAP" id="MF_00156">
    <property type="entry name" value="PanB"/>
    <property type="match status" value="1"/>
</dbReference>
<dbReference type="InterPro" id="IPR003700">
    <property type="entry name" value="Pantoate_hydroxy_MeTrfase"/>
</dbReference>
<dbReference type="InterPro" id="IPR015813">
    <property type="entry name" value="Pyrv/PenolPyrv_kinase-like_dom"/>
</dbReference>
<dbReference type="InterPro" id="IPR040442">
    <property type="entry name" value="Pyrv_kinase-like_dom_sf"/>
</dbReference>
<dbReference type="NCBIfam" id="TIGR00222">
    <property type="entry name" value="panB"/>
    <property type="match status" value="1"/>
</dbReference>
<dbReference type="NCBIfam" id="NF001452">
    <property type="entry name" value="PRK00311.1"/>
    <property type="match status" value="1"/>
</dbReference>
<dbReference type="PANTHER" id="PTHR20881">
    <property type="entry name" value="3-METHYL-2-OXOBUTANOATE HYDROXYMETHYLTRANSFERASE"/>
    <property type="match status" value="1"/>
</dbReference>
<dbReference type="PANTHER" id="PTHR20881:SF0">
    <property type="entry name" value="3-METHYL-2-OXOBUTANOATE HYDROXYMETHYLTRANSFERASE"/>
    <property type="match status" value="1"/>
</dbReference>
<dbReference type="Pfam" id="PF02548">
    <property type="entry name" value="Pantoate_transf"/>
    <property type="match status" value="1"/>
</dbReference>
<dbReference type="PIRSF" id="PIRSF000388">
    <property type="entry name" value="Pantoate_hydroxy_MeTrfase"/>
    <property type="match status" value="1"/>
</dbReference>
<dbReference type="SUPFAM" id="SSF51621">
    <property type="entry name" value="Phosphoenolpyruvate/pyruvate domain"/>
    <property type="match status" value="1"/>
</dbReference>
<protein>
    <recommendedName>
        <fullName>3-methyl-2-oxobutanoate hydroxymethyltransferase</fullName>
        <ecNumber>2.1.2.11</ecNumber>
    </recommendedName>
    <alternativeName>
        <fullName>Ketopantoate hydroxymethyltransferase</fullName>
        <shortName>KPHMT</shortName>
    </alternativeName>
</protein>
<organism>
    <name type="scientific">Mycobacterium tuberculosis (strain CDC 1551 / Oshkosh)</name>
    <dbReference type="NCBI Taxonomy" id="83331"/>
    <lineage>
        <taxon>Bacteria</taxon>
        <taxon>Bacillati</taxon>
        <taxon>Actinomycetota</taxon>
        <taxon>Actinomycetes</taxon>
        <taxon>Mycobacteriales</taxon>
        <taxon>Mycobacteriaceae</taxon>
        <taxon>Mycobacterium</taxon>
        <taxon>Mycobacterium tuberculosis complex</taxon>
    </lineage>
</organism>
<comment type="function">
    <text evidence="1">Catalyzes the reversible reaction in which hydroxymethyl group from 5,10-methylenetetrahydrofolate is transferred onto alpha-ketoisovalerate to form ketopantoate.</text>
</comment>
<comment type="catalytic activity">
    <reaction>
        <text>3-methyl-2-oxobutanoate + (6R)-5,10-methylene-5,6,7,8-tetrahydrofolate + H2O = 2-dehydropantoate + (6S)-5,6,7,8-tetrahydrofolate</text>
        <dbReference type="Rhea" id="RHEA:11824"/>
        <dbReference type="ChEBI" id="CHEBI:11561"/>
        <dbReference type="ChEBI" id="CHEBI:11851"/>
        <dbReference type="ChEBI" id="CHEBI:15377"/>
        <dbReference type="ChEBI" id="CHEBI:15636"/>
        <dbReference type="ChEBI" id="CHEBI:57453"/>
        <dbReference type="EC" id="2.1.2.11"/>
    </reaction>
</comment>
<comment type="cofactor">
    <cofactor evidence="1">
        <name>Mg(2+)</name>
        <dbReference type="ChEBI" id="CHEBI:18420"/>
    </cofactor>
    <text evidence="1">Binds 1 Mg(2+) ion per subunit.</text>
</comment>
<comment type="pathway">
    <text>Cofactor biosynthesis; (R)-pantothenate biosynthesis; (R)-pantoate from 3-methyl-2-oxobutanoate: step 1/2.</text>
</comment>
<comment type="subunit">
    <text evidence="1">Homodecamer; pentamer of dimers.</text>
</comment>
<comment type="subcellular location">
    <subcellularLocation>
        <location evidence="3">Cytoplasm</location>
    </subcellularLocation>
</comment>
<comment type="similarity">
    <text evidence="3">Belongs to the PanB family.</text>
</comment>